<proteinExistence type="inferred from homology"/>
<accession>Q8X9U4</accession>
<accession>Q7AFH2</accession>
<sequence>MNIIKQPLRVGVGGPVGSGKTALLEALCKSMRDTWQLAVVTNDIYTREDQRILTEAGALEAERIVGVETGGCPHTAIREDASMNLAAVEALSEKFGNLELIFVESGGDNLSATFSPELADLTIYVIDVAEGEKIPRKGGPGITKSDFLVINKTDLAPYVGASLEVMERDTLRMRGERPWGFTNLKSGEGLQNIIAFIEEQGMLGK</sequence>
<dbReference type="EMBL" id="AE005174">
    <property type="protein sequence ID" value="AAG55293.1"/>
    <property type="molecule type" value="Genomic_DNA"/>
</dbReference>
<dbReference type="EMBL" id="AE005174">
    <property type="protein sequence ID" value="AAG55702.1"/>
    <property type="molecule type" value="Genomic_DNA"/>
</dbReference>
<dbReference type="EMBL" id="BA000007">
    <property type="protein sequence ID" value="BAB34750.1"/>
    <property type="molecule type" value="Genomic_DNA"/>
</dbReference>
<dbReference type="PIR" id="A85604">
    <property type="entry name" value="A85604"/>
</dbReference>
<dbReference type="PIR" id="G90794">
    <property type="entry name" value="G90794"/>
</dbReference>
<dbReference type="SMR" id="Q8X9U4"/>
<dbReference type="STRING" id="155864.Z1148"/>
<dbReference type="KEGG" id="ece:Z1148"/>
<dbReference type="KEGG" id="ece:Z1587"/>
<dbReference type="KEGG" id="ecs:ECs_1327"/>
<dbReference type="PATRIC" id="fig|386585.9.peg.1432"/>
<dbReference type="eggNOG" id="COG0378">
    <property type="taxonomic scope" value="Bacteria"/>
</dbReference>
<dbReference type="HOGENOM" id="CLU_072144_1_0_6"/>
<dbReference type="OMA" id="KMRGDKP"/>
<dbReference type="Proteomes" id="UP000000558">
    <property type="component" value="Chromosome"/>
</dbReference>
<dbReference type="Proteomes" id="UP000002519">
    <property type="component" value="Chromosome"/>
</dbReference>
<dbReference type="GO" id="GO:0005737">
    <property type="term" value="C:cytoplasm"/>
    <property type="evidence" value="ECO:0007669"/>
    <property type="project" value="UniProtKB-SubCell"/>
</dbReference>
<dbReference type="GO" id="GO:0005525">
    <property type="term" value="F:GTP binding"/>
    <property type="evidence" value="ECO:0007669"/>
    <property type="project" value="UniProtKB-KW"/>
</dbReference>
<dbReference type="GO" id="GO:0003924">
    <property type="term" value="F:GTPase activity"/>
    <property type="evidence" value="ECO:0007669"/>
    <property type="project" value="InterPro"/>
</dbReference>
<dbReference type="GO" id="GO:0016151">
    <property type="term" value="F:nickel cation binding"/>
    <property type="evidence" value="ECO:0007669"/>
    <property type="project" value="UniProtKB-UniRule"/>
</dbReference>
<dbReference type="GO" id="GO:0043419">
    <property type="term" value="P:urea catabolic process"/>
    <property type="evidence" value="ECO:0007669"/>
    <property type="project" value="InterPro"/>
</dbReference>
<dbReference type="CDD" id="cd05540">
    <property type="entry name" value="UreG"/>
    <property type="match status" value="1"/>
</dbReference>
<dbReference type="FunFam" id="3.40.50.300:FF:000208">
    <property type="entry name" value="Urease accessory protein UreG"/>
    <property type="match status" value="1"/>
</dbReference>
<dbReference type="Gene3D" id="3.40.50.300">
    <property type="entry name" value="P-loop containing nucleotide triphosphate hydrolases"/>
    <property type="match status" value="1"/>
</dbReference>
<dbReference type="HAMAP" id="MF_01389">
    <property type="entry name" value="UreG"/>
    <property type="match status" value="1"/>
</dbReference>
<dbReference type="InterPro" id="IPR003495">
    <property type="entry name" value="CobW/HypB/UreG_nucleotide-bd"/>
</dbReference>
<dbReference type="InterPro" id="IPR027417">
    <property type="entry name" value="P-loop_NTPase"/>
</dbReference>
<dbReference type="InterPro" id="IPR004400">
    <property type="entry name" value="UreG"/>
</dbReference>
<dbReference type="NCBIfam" id="TIGR00101">
    <property type="entry name" value="ureG"/>
    <property type="match status" value="1"/>
</dbReference>
<dbReference type="PANTHER" id="PTHR31715">
    <property type="entry name" value="UREASE ACCESSORY PROTEIN G"/>
    <property type="match status" value="1"/>
</dbReference>
<dbReference type="PANTHER" id="PTHR31715:SF0">
    <property type="entry name" value="UREASE ACCESSORY PROTEIN G"/>
    <property type="match status" value="1"/>
</dbReference>
<dbReference type="Pfam" id="PF02492">
    <property type="entry name" value="cobW"/>
    <property type="match status" value="1"/>
</dbReference>
<dbReference type="PIRSF" id="PIRSF005624">
    <property type="entry name" value="Ni-bind_GTPase"/>
    <property type="match status" value="1"/>
</dbReference>
<dbReference type="SUPFAM" id="SSF52540">
    <property type="entry name" value="P-loop containing nucleoside triphosphate hydrolases"/>
    <property type="match status" value="1"/>
</dbReference>
<keyword id="KW-0143">Chaperone</keyword>
<keyword id="KW-0963">Cytoplasm</keyword>
<keyword id="KW-0342">GTP-binding</keyword>
<keyword id="KW-0996">Nickel insertion</keyword>
<keyword id="KW-0547">Nucleotide-binding</keyword>
<keyword id="KW-1185">Reference proteome</keyword>
<organism>
    <name type="scientific">Escherichia coli O157:H7</name>
    <dbReference type="NCBI Taxonomy" id="83334"/>
    <lineage>
        <taxon>Bacteria</taxon>
        <taxon>Pseudomonadati</taxon>
        <taxon>Pseudomonadota</taxon>
        <taxon>Gammaproteobacteria</taxon>
        <taxon>Enterobacterales</taxon>
        <taxon>Enterobacteriaceae</taxon>
        <taxon>Escherichia</taxon>
    </lineage>
</organism>
<gene>
    <name evidence="1" type="primary">ureG1</name>
    <name type="ordered locus">Z1148</name>
    <name type="ordered locus">ECs1327</name>
</gene>
<gene>
    <name evidence="1" type="primary">ureG2</name>
    <name type="ordered locus">Z1587</name>
</gene>
<name>UREG_ECO57</name>
<evidence type="ECO:0000255" key="1">
    <source>
        <dbReference type="HAMAP-Rule" id="MF_01389"/>
    </source>
</evidence>
<evidence type="ECO:0000305" key="2"/>
<reference key="1">
    <citation type="journal article" date="2001" name="Nature">
        <title>Genome sequence of enterohaemorrhagic Escherichia coli O157:H7.</title>
        <authorList>
            <person name="Perna N.T."/>
            <person name="Plunkett G. III"/>
            <person name="Burland V."/>
            <person name="Mau B."/>
            <person name="Glasner J.D."/>
            <person name="Rose D.J."/>
            <person name="Mayhew G.F."/>
            <person name="Evans P.S."/>
            <person name="Gregor J."/>
            <person name="Kirkpatrick H.A."/>
            <person name="Posfai G."/>
            <person name="Hackett J."/>
            <person name="Klink S."/>
            <person name="Boutin A."/>
            <person name="Shao Y."/>
            <person name="Miller L."/>
            <person name="Grotbeck E.J."/>
            <person name="Davis N.W."/>
            <person name="Lim A."/>
            <person name="Dimalanta E.T."/>
            <person name="Potamousis K."/>
            <person name="Apodaca J."/>
            <person name="Anantharaman T.S."/>
            <person name="Lin J."/>
            <person name="Yen G."/>
            <person name="Schwartz D.C."/>
            <person name="Welch R.A."/>
            <person name="Blattner F.R."/>
        </authorList>
    </citation>
    <scope>NUCLEOTIDE SEQUENCE [LARGE SCALE GENOMIC DNA]</scope>
    <source>
        <strain>O157:H7 / EDL933 / ATCC 700927 / EHEC</strain>
    </source>
</reference>
<reference key="2">
    <citation type="journal article" date="2001" name="DNA Res.">
        <title>Complete genome sequence of enterohemorrhagic Escherichia coli O157:H7 and genomic comparison with a laboratory strain K-12.</title>
        <authorList>
            <person name="Hayashi T."/>
            <person name="Makino K."/>
            <person name="Ohnishi M."/>
            <person name="Kurokawa K."/>
            <person name="Ishii K."/>
            <person name="Yokoyama K."/>
            <person name="Han C.-G."/>
            <person name="Ohtsubo E."/>
            <person name="Nakayama K."/>
            <person name="Murata T."/>
            <person name="Tanaka M."/>
            <person name="Tobe T."/>
            <person name="Iida T."/>
            <person name="Takami H."/>
            <person name="Honda T."/>
            <person name="Sasakawa C."/>
            <person name="Ogasawara N."/>
            <person name="Yasunaga T."/>
            <person name="Kuhara S."/>
            <person name="Shiba T."/>
            <person name="Hattori M."/>
            <person name="Shinagawa H."/>
        </authorList>
    </citation>
    <scope>NUCLEOTIDE SEQUENCE [LARGE SCALE GENOMIC DNA]</scope>
    <source>
        <strain>O157:H7 / Sakai / RIMD 0509952 / EHEC</strain>
    </source>
</reference>
<reference key="3">
    <citation type="journal article" date="2004" name="Microbiology">
        <title>Urease activity of enterohaemorrhagic Escherichia coli depends on a specific one-base substitution in ureD.</title>
        <authorList>
            <person name="Nakano M."/>
            <person name="Iida T."/>
            <person name="Honda T."/>
        </authorList>
    </citation>
    <scope>ABSENCE OF UREASE</scope>
    <source>
        <strain>O157:H7 / Sakai / RIMD 0509952 / EHEC</strain>
    </source>
</reference>
<feature type="chain" id="PRO_0000347390" description="Urease accessory protein UreG">
    <location>
        <begin position="1"/>
        <end position="205"/>
    </location>
</feature>
<feature type="binding site" evidence="1">
    <location>
        <begin position="14"/>
        <end position="21"/>
    </location>
    <ligand>
        <name>GTP</name>
        <dbReference type="ChEBI" id="CHEBI:37565"/>
    </ligand>
</feature>
<comment type="function">
    <text evidence="1">Facilitates the functional incorporation of the urease nickel metallocenter. This process requires GTP hydrolysis, probably effectuated by UreG.</text>
</comment>
<comment type="subunit">
    <text evidence="1">Homodimer. UreD, UreF and UreG form a complex that acts as a GTP-hydrolysis-dependent molecular chaperone, activating the urease apoprotein by helping to assemble the nickel containing metallocenter of UreC. The UreE protein probably delivers the nickel.</text>
</comment>
<comment type="subcellular location">
    <subcellularLocation>
        <location evidence="1">Cytoplasm</location>
    </subcellularLocation>
</comment>
<comment type="similarity">
    <text evidence="1">Belongs to the SIMIBI class G3E GTPase family. UreG subfamily.</text>
</comment>
<comment type="caution">
    <text evidence="2">Neither O157 strain expresses urease due to a truncation of ureD, the last gene of the probable operon. Urease activity is restored in O157 / Sakai upon complementation with wild-type ureD.</text>
</comment>
<comment type="caution">
    <text evidence="2">This region of the chromosome is duplicated in strain O157:H7 / EDL933 but not in O157:H7 / Sakai.</text>
</comment>
<protein>
    <recommendedName>
        <fullName evidence="1">Urease accessory protein UreG</fullName>
    </recommendedName>
</protein>